<gene>
    <name evidence="1" type="primary">rplO</name>
    <name type="ordered locus">lhv_0331</name>
</gene>
<comment type="function">
    <text evidence="1">Binds to the 23S rRNA.</text>
</comment>
<comment type="subunit">
    <text evidence="1">Part of the 50S ribosomal subunit.</text>
</comment>
<comment type="similarity">
    <text evidence="1">Belongs to the universal ribosomal protein uL15 family.</text>
</comment>
<accession>A8YXM4</accession>
<protein>
    <recommendedName>
        <fullName evidence="1">Large ribosomal subunit protein uL15</fullName>
    </recommendedName>
    <alternativeName>
        <fullName evidence="3">50S ribosomal protein L15</fullName>
    </alternativeName>
</protein>
<organism>
    <name type="scientific">Lactobacillus helveticus (strain DPC 4571)</name>
    <dbReference type="NCBI Taxonomy" id="405566"/>
    <lineage>
        <taxon>Bacteria</taxon>
        <taxon>Bacillati</taxon>
        <taxon>Bacillota</taxon>
        <taxon>Bacilli</taxon>
        <taxon>Lactobacillales</taxon>
        <taxon>Lactobacillaceae</taxon>
        <taxon>Lactobacillus</taxon>
    </lineage>
</organism>
<reference key="1">
    <citation type="journal article" date="2008" name="J. Bacteriol.">
        <title>Genome sequence of Lactobacillus helveticus: an organism distinguished by selective gene loss and IS element expansion.</title>
        <authorList>
            <person name="Callanan M."/>
            <person name="Kaleta P."/>
            <person name="O'Callaghan J."/>
            <person name="O'Sullivan O."/>
            <person name="Jordan K."/>
            <person name="McAuliffe O."/>
            <person name="Sangrador-Vegas A."/>
            <person name="Slattery L."/>
            <person name="Fitzgerald G.F."/>
            <person name="Beresford T."/>
            <person name="Ross R.P."/>
        </authorList>
    </citation>
    <scope>NUCLEOTIDE SEQUENCE [LARGE SCALE GENOMIC DNA]</scope>
    <source>
        <strain>DPC 4571</strain>
    </source>
</reference>
<evidence type="ECO:0000255" key="1">
    <source>
        <dbReference type="HAMAP-Rule" id="MF_01341"/>
    </source>
</evidence>
<evidence type="ECO:0000256" key="2">
    <source>
        <dbReference type="SAM" id="MobiDB-lite"/>
    </source>
</evidence>
<evidence type="ECO:0000305" key="3"/>
<keyword id="KW-0687">Ribonucleoprotein</keyword>
<keyword id="KW-0689">Ribosomal protein</keyword>
<keyword id="KW-0694">RNA-binding</keyword>
<keyword id="KW-0699">rRNA-binding</keyword>
<proteinExistence type="inferred from homology"/>
<name>RL15_LACH4</name>
<feature type="chain" id="PRO_1000073314" description="Large ribosomal subunit protein uL15">
    <location>
        <begin position="1"/>
        <end position="146"/>
    </location>
</feature>
<feature type="region of interest" description="Disordered" evidence="2">
    <location>
        <begin position="1"/>
        <end position="55"/>
    </location>
</feature>
<feature type="compositionally biased region" description="Basic and acidic residues" evidence="2">
    <location>
        <begin position="1"/>
        <end position="13"/>
    </location>
</feature>
<feature type="compositionally biased region" description="Gly residues" evidence="2">
    <location>
        <begin position="23"/>
        <end position="35"/>
    </location>
</feature>
<dbReference type="EMBL" id="CP000517">
    <property type="protein sequence ID" value="ABX26555.1"/>
    <property type="molecule type" value="Genomic_DNA"/>
</dbReference>
<dbReference type="RefSeq" id="WP_003625809.1">
    <property type="nucleotide sequence ID" value="NC_010080.1"/>
</dbReference>
<dbReference type="SMR" id="A8YXM4"/>
<dbReference type="GeneID" id="83725528"/>
<dbReference type="KEGG" id="lhe:lhv_0331"/>
<dbReference type="eggNOG" id="COG0200">
    <property type="taxonomic scope" value="Bacteria"/>
</dbReference>
<dbReference type="HOGENOM" id="CLU_055188_4_2_9"/>
<dbReference type="Proteomes" id="UP000000790">
    <property type="component" value="Chromosome"/>
</dbReference>
<dbReference type="GO" id="GO:0022625">
    <property type="term" value="C:cytosolic large ribosomal subunit"/>
    <property type="evidence" value="ECO:0007669"/>
    <property type="project" value="TreeGrafter"/>
</dbReference>
<dbReference type="GO" id="GO:0019843">
    <property type="term" value="F:rRNA binding"/>
    <property type="evidence" value="ECO:0007669"/>
    <property type="project" value="UniProtKB-UniRule"/>
</dbReference>
<dbReference type="GO" id="GO:0003735">
    <property type="term" value="F:structural constituent of ribosome"/>
    <property type="evidence" value="ECO:0007669"/>
    <property type="project" value="InterPro"/>
</dbReference>
<dbReference type="GO" id="GO:0006412">
    <property type="term" value="P:translation"/>
    <property type="evidence" value="ECO:0007669"/>
    <property type="project" value="UniProtKB-UniRule"/>
</dbReference>
<dbReference type="Gene3D" id="3.100.10.10">
    <property type="match status" value="1"/>
</dbReference>
<dbReference type="HAMAP" id="MF_01341">
    <property type="entry name" value="Ribosomal_uL15"/>
    <property type="match status" value="1"/>
</dbReference>
<dbReference type="InterPro" id="IPR030878">
    <property type="entry name" value="Ribosomal_uL15"/>
</dbReference>
<dbReference type="InterPro" id="IPR021131">
    <property type="entry name" value="Ribosomal_uL15/eL18"/>
</dbReference>
<dbReference type="InterPro" id="IPR036227">
    <property type="entry name" value="Ribosomal_uL15/eL18_sf"/>
</dbReference>
<dbReference type="InterPro" id="IPR005749">
    <property type="entry name" value="Ribosomal_uL15_bac-type"/>
</dbReference>
<dbReference type="InterPro" id="IPR001196">
    <property type="entry name" value="Ribosomal_uL15_CS"/>
</dbReference>
<dbReference type="NCBIfam" id="TIGR01071">
    <property type="entry name" value="rplO_bact"/>
    <property type="match status" value="1"/>
</dbReference>
<dbReference type="PANTHER" id="PTHR12934">
    <property type="entry name" value="50S RIBOSOMAL PROTEIN L15"/>
    <property type="match status" value="1"/>
</dbReference>
<dbReference type="PANTHER" id="PTHR12934:SF11">
    <property type="entry name" value="LARGE RIBOSOMAL SUBUNIT PROTEIN UL15M"/>
    <property type="match status" value="1"/>
</dbReference>
<dbReference type="Pfam" id="PF00828">
    <property type="entry name" value="Ribosomal_L27A"/>
    <property type="match status" value="1"/>
</dbReference>
<dbReference type="SUPFAM" id="SSF52080">
    <property type="entry name" value="Ribosomal proteins L15p and L18e"/>
    <property type="match status" value="1"/>
</dbReference>
<dbReference type="PROSITE" id="PS00475">
    <property type="entry name" value="RIBOSOMAL_L15"/>
    <property type="match status" value="1"/>
</dbReference>
<sequence length="146" mass="15818">MKLHELHSAEGSRRNRKRVGRGTSSGYGKTSGRGQKGQLARQGGHTRLGFEGGQMPLFRTMPKRGFKNINRKEYAIVNLDDLNKFNDGSEVTVETLKENGLVKKELSGVKLLGNGELKVKLTVKVNKVSAAAKKAVEAAGGTVEVI</sequence>